<dbReference type="EC" id="1.3.7.2"/>
<dbReference type="EMBL" id="AJ278499">
    <property type="protein sequence ID" value="CAB95700.1"/>
    <property type="molecule type" value="Genomic_DNA"/>
</dbReference>
<dbReference type="EMBL" id="AE017126">
    <property type="protein sequence ID" value="AAQ00793.1"/>
    <property type="molecule type" value="Genomic_DNA"/>
</dbReference>
<dbReference type="RefSeq" id="NP_876140.3">
    <property type="nucleotide sequence ID" value="NC_005042.1"/>
</dbReference>
<dbReference type="RefSeq" id="WP_024015424.1">
    <property type="nucleotide sequence ID" value="NC_005042.1"/>
</dbReference>
<dbReference type="SMR" id="Q9K4U6"/>
<dbReference type="STRING" id="167539.Pro_1749"/>
<dbReference type="EnsemblBacteria" id="AAQ00793">
    <property type="protein sequence ID" value="AAQ00793"/>
    <property type="gene ID" value="Pro_1749"/>
</dbReference>
<dbReference type="KEGG" id="pma:Pro_1749"/>
<dbReference type="PATRIC" id="fig|167539.5.peg.1847"/>
<dbReference type="eggNOG" id="ENOG502Z8J9">
    <property type="taxonomic scope" value="Bacteria"/>
</dbReference>
<dbReference type="HOGENOM" id="CLU_086208_0_0_3"/>
<dbReference type="OrthoDB" id="527390at2"/>
<dbReference type="Proteomes" id="UP000001420">
    <property type="component" value="Chromosome"/>
</dbReference>
<dbReference type="GO" id="GO:0050617">
    <property type="term" value="F:15,16-dihydrobiliverdin:ferredoxin oxidoreductase activity"/>
    <property type="evidence" value="ECO:0007669"/>
    <property type="project" value="UniProtKB-UniRule"/>
</dbReference>
<dbReference type="GO" id="GO:0050897">
    <property type="term" value="F:cobalt ion binding"/>
    <property type="evidence" value="ECO:0007669"/>
    <property type="project" value="InterPro"/>
</dbReference>
<dbReference type="GO" id="GO:0010024">
    <property type="term" value="P:phytochromobilin biosynthetic process"/>
    <property type="evidence" value="ECO:0007669"/>
    <property type="project" value="InterPro"/>
</dbReference>
<dbReference type="Gene3D" id="3.40.1500.20">
    <property type="match status" value="1"/>
</dbReference>
<dbReference type="HAMAP" id="MF_00792">
    <property type="entry name" value="PebA"/>
    <property type="match status" value="1"/>
</dbReference>
<dbReference type="InterPro" id="IPR023658">
    <property type="entry name" value="DiHydbiliverdin_OxRdtase"/>
</dbReference>
<dbReference type="InterPro" id="IPR009249">
    <property type="entry name" value="Ferredoxin-dep_bilin_Rdtase"/>
</dbReference>
<dbReference type="NCBIfam" id="NF009720">
    <property type="entry name" value="PRK13247.1"/>
    <property type="match status" value="1"/>
</dbReference>
<dbReference type="PANTHER" id="PTHR34557">
    <property type="entry name" value="PHYTOCHROMOBILIN:FERREDOXIN OXIDOREDUCTASE, CHLOROPLASTIC"/>
    <property type="match status" value="1"/>
</dbReference>
<dbReference type="PANTHER" id="PTHR34557:SF1">
    <property type="entry name" value="PHYTOCHROMOBILIN:FERREDOXIN OXIDOREDUCTASE, CHLOROPLASTIC"/>
    <property type="match status" value="1"/>
</dbReference>
<dbReference type="Pfam" id="PF05996">
    <property type="entry name" value="Fe_bilin_red"/>
    <property type="match status" value="1"/>
</dbReference>
<sequence length="241" mass="28699">MNKLMLQDLHNNLKRRIISHGGKPIEVENGMSERFSHKQDTVIKSWLWDVPGFRRWRVTRMDAGDKLQVLNSVAYPAYTNDKPILGIDILWFGLKRKLVAVLDFQPLVQEERYFCRYYKDLQILKNRFVDFNSQKTMKIYDSNKYFSPWVLLYNGSFDDLQCSLAKILDEFLHAYWQVDNNNSREYIKIIPSKVEQLHINYDIYSAERDPAHGLFKSYFGQTWADQFVREFLFPHSHLTAD</sequence>
<protein>
    <recommendedName>
        <fullName>15,16-dihydrobiliverdin:ferredoxin oxidoreductase</fullName>
        <ecNumber>1.3.7.2</ecNumber>
    </recommendedName>
</protein>
<comment type="function">
    <text evidence="1">Catalyzes the two-electron reduction of biliverdin IX-alpha at the C15 methine bridge.</text>
</comment>
<comment type="catalytic activity">
    <reaction>
        <text>15,16-dihydrobiliverdin + oxidized 2[4Fe-4S]-[ferredoxin] = biliverdin IXalpha + reduced 2[4Fe-4S]-[ferredoxin] + 2 H(+)</text>
        <dbReference type="Rhea" id="RHEA:10168"/>
        <dbReference type="Rhea" id="RHEA-COMP:10002"/>
        <dbReference type="Rhea" id="RHEA-COMP:10004"/>
        <dbReference type="ChEBI" id="CHEBI:15378"/>
        <dbReference type="ChEBI" id="CHEBI:33722"/>
        <dbReference type="ChEBI" id="CHEBI:33723"/>
        <dbReference type="ChEBI" id="CHEBI:57899"/>
        <dbReference type="ChEBI" id="CHEBI:57991"/>
        <dbReference type="EC" id="1.3.7.2"/>
    </reaction>
</comment>
<comment type="similarity">
    <text evidence="2">Belongs to the HY2 family.</text>
</comment>
<keyword id="KW-0560">Oxidoreductase</keyword>
<keyword id="KW-1185">Reference proteome</keyword>
<accession>Q9K4U6</accession>
<gene>
    <name type="primary">pebA</name>
    <name type="ordered locus">Pro_1749</name>
</gene>
<organism>
    <name type="scientific">Prochlorococcus marinus (strain SARG / CCMP1375 / SS120)</name>
    <dbReference type="NCBI Taxonomy" id="167539"/>
    <lineage>
        <taxon>Bacteria</taxon>
        <taxon>Bacillati</taxon>
        <taxon>Cyanobacteriota</taxon>
        <taxon>Cyanophyceae</taxon>
        <taxon>Synechococcales</taxon>
        <taxon>Prochlorococcaceae</taxon>
        <taxon>Prochlorococcus</taxon>
    </lineage>
</organism>
<reference key="1">
    <citation type="submission" date="2000-06" db="EMBL/GenBank/DDBJ databases">
        <title>Organization of the ORF241/257 coding region from Prochlorococcus marinus SS120.</title>
        <authorList>
            <person name="Irlbacher H.M."/>
            <person name="Hess W.R."/>
        </authorList>
    </citation>
    <scope>NUCLEOTIDE SEQUENCE [GENOMIC DNA]</scope>
    <source>
        <strain>SARG / CCMP1375 / SS120</strain>
    </source>
</reference>
<reference key="2">
    <citation type="journal article" date="2003" name="Proc. Natl. Acad. Sci. U.S.A.">
        <title>Genome sequence of the cyanobacterium Prochlorococcus marinus SS120, a nearly minimal oxyphototrophic genome.</title>
        <authorList>
            <person name="Dufresne A."/>
            <person name="Salanoubat M."/>
            <person name="Partensky F."/>
            <person name="Artiguenave F."/>
            <person name="Axmann I.M."/>
            <person name="Barbe V."/>
            <person name="Duprat S."/>
            <person name="Galperin M.Y."/>
            <person name="Koonin E.V."/>
            <person name="Le Gall F."/>
            <person name="Makarova K.S."/>
            <person name="Ostrowski M."/>
            <person name="Oztas S."/>
            <person name="Robert C."/>
            <person name="Rogozin I.B."/>
            <person name="Scanlan D.J."/>
            <person name="Tandeau de Marsac N."/>
            <person name="Weissenbach J."/>
            <person name="Wincker P."/>
            <person name="Wolf Y.I."/>
            <person name="Hess W.R."/>
        </authorList>
    </citation>
    <scope>NUCLEOTIDE SEQUENCE [LARGE SCALE GENOMIC DNA]</scope>
    <source>
        <strain>SARG / CCMP1375 / SS120</strain>
    </source>
</reference>
<feature type="chain" id="PRO_0000216726" description="15,16-dihydrobiliverdin:ferredoxin oxidoreductase">
    <location>
        <begin position="1"/>
        <end position="241"/>
    </location>
</feature>
<proteinExistence type="inferred from homology"/>
<evidence type="ECO:0000250" key="1"/>
<evidence type="ECO:0000305" key="2"/>
<name>PEBA_PROMA</name>